<name>CMTR_MYCBO</name>
<evidence type="ECO:0000250" key="1"/>
<evidence type="ECO:0000255" key="2">
    <source>
        <dbReference type="PROSITE-ProRule" id="PRU00340"/>
    </source>
</evidence>
<comment type="function">
    <text evidence="1">Metal-responsive transcriptional repressor for the cmt operon. Binding of cadmium or lead causes the repressor to dissociate from the DNA (By similarity).</text>
</comment>
<comment type="subunit">
    <text evidence="1">Homodimer.</text>
</comment>
<keyword id="KW-0104">Cadmium</keyword>
<keyword id="KW-0238">DNA-binding</keyword>
<keyword id="KW-0479">Metal-binding</keyword>
<keyword id="KW-1185">Reference proteome</keyword>
<keyword id="KW-0804">Transcription</keyword>
<keyword id="KW-0805">Transcription regulation</keyword>
<dbReference type="EMBL" id="LT708304">
    <property type="protein sequence ID" value="SIU00624.1"/>
    <property type="molecule type" value="Genomic_DNA"/>
</dbReference>
<dbReference type="RefSeq" id="NP_855667.1">
    <property type="nucleotide sequence ID" value="NC_002945.3"/>
</dbReference>
<dbReference type="RefSeq" id="WP_003410018.1">
    <property type="nucleotide sequence ID" value="NC_002945.4"/>
</dbReference>
<dbReference type="BMRB" id="P67732"/>
<dbReference type="SMR" id="P67732"/>
<dbReference type="GeneID" id="45425973"/>
<dbReference type="KEGG" id="mbo:BQ2027_MB2017C"/>
<dbReference type="PATRIC" id="fig|233413.5.peg.2216"/>
<dbReference type="Proteomes" id="UP000001419">
    <property type="component" value="Chromosome"/>
</dbReference>
<dbReference type="GO" id="GO:0097063">
    <property type="term" value="F:cadmium ion sensor activity"/>
    <property type="evidence" value="ECO:0007669"/>
    <property type="project" value="TreeGrafter"/>
</dbReference>
<dbReference type="GO" id="GO:0003677">
    <property type="term" value="F:DNA binding"/>
    <property type="evidence" value="ECO:0007669"/>
    <property type="project" value="UniProtKB-KW"/>
</dbReference>
<dbReference type="GO" id="GO:0003700">
    <property type="term" value="F:DNA-binding transcription factor activity"/>
    <property type="evidence" value="ECO:0007669"/>
    <property type="project" value="InterPro"/>
</dbReference>
<dbReference type="GO" id="GO:0032791">
    <property type="term" value="F:lead ion binding"/>
    <property type="evidence" value="ECO:0007669"/>
    <property type="project" value="TreeGrafter"/>
</dbReference>
<dbReference type="GO" id="GO:0046686">
    <property type="term" value="P:response to cadmium ion"/>
    <property type="evidence" value="ECO:0007669"/>
    <property type="project" value="TreeGrafter"/>
</dbReference>
<dbReference type="GO" id="GO:0010288">
    <property type="term" value="P:response to lead ion"/>
    <property type="evidence" value="ECO:0007669"/>
    <property type="project" value="TreeGrafter"/>
</dbReference>
<dbReference type="CDD" id="cd00090">
    <property type="entry name" value="HTH_ARSR"/>
    <property type="match status" value="1"/>
</dbReference>
<dbReference type="FunFam" id="1.10.10.10:FF:000373">
    <property type="entry name" value="ArsR family transcriptional regulator"/>
    <property type="match status" value="1"/>
</dbReference>
<dbReference type="Gene3D" id="1.10.10.10">
    <property type="entry name" value="Winged helix-like DNA-binding domain superfamily/Winged helix DNA-binding domain"/>
    <property type="match status" value="1"/>
</dbReference>
<dbReference type="InterPro" id="IPR011991">
    <property type="entry name" value="ArsR-like_HTH"/>
</dbReference>
<dbReference type="InterPro" id="IPR001845">
    <property type="entry name" value="HTH_ArsR_DNA-bd_dom"/>
</dbReference>
<dbReference type="InterPro" id="IPR052543">
    <property type="entry name" value="HTH_Metal-responsive_Reg"/>
</dbReference>
<dbReference type="InterPro" id="IPR036388">
    <property type="entry name" value="WH-like_DNA-bd_sf"/>
</dbReference>
<dbReference type="InterPro" id="IPR036390">
    <property type="entry name" value="WH_DNA-bd_sf"/>
</dbReference>
<dbReference type="NCBIfam" id="NF033788">
    <property type="entry name" value="HTH_metalloreg"/>
    <property type="match status" value="1"/>
</dbReference>
<dbReference type="PANTHER" id="PTHR39168:SF2">
    <property type="entry name" value="HTH-TYPE TRANSCRIPTIONAL REGULATOR CMTR"/>
    <property type="match status" value="1"/>
</dbReference>
<dbReference type="PANTHER" id="PTHR39168">
    <property type="entry name" value="TRANSCRIPTIONAL REGULATOR-RELATED"/>
    <property type="match status" value="1"/>
</dbReference>
<dbReference type="Pfam" id="PF01022">
    <property type="entry name" value="HTH_5"/>
    <property type="match status" value="1"/>
</dbReference>
<dbReference type="PRINTS" id="PR00778">
    <property type="entry name" value="HTHARSR"/>
</dbReference>
<dbReference type="SMART" id="SM00418">
    <property type="entry name" value="HTH_ARSR"/>
    <property type="match status" value="1"/>
</dbReference>
<dbReference type="SUPFAM" id="SSF46785">
    <property type="entry name" value="Winged helix' DNA-binding domain"/>
    <property type="match status" value="1"/>
</dbReference>
<dbReference type="PROSITE" id="PS50987">
    <property type="entry name" value="HTH_ARSR_2"/>
    <property type="match status" value="1"/>
</dbReference>
<proteinExistence type="inferred from homology"/>
<reference key="1">
    <citation type="journal article" date="2003" name="Proc. Natl. Acad. Sci. U.S.A.">
        <title>The complete genome sequence of Mycobacterium bovis.</title>
        <authorList>
            <person name="Garnier T."/>
            <person name="Eiglmeier K."/>
            <person name="Camus J.-C."/>
            <person name="Medina N."/>
            <person name="Mansoor H."/>
            <person name="Pryor M."/>
            <person name="Duthoy S."/>
            <person name="Grondin S."/>
            <person name="Lacroix C."/>
            <person name="Monsempe C."/>
            <person name="Simon S."/>
            <person name="Harris B."/>
            <person name="Atkin R."/>
            <person name="Doggett J."/>
            <person name="Mayes R."/>
            <person name="Keating L."/>
            <person name="Wheeler P.R."/>
            <person name="Parkhill J."/>
            <person name="Barrell B.G."/>
            <person name="Cole S.T."/>
            <person name="Gordon S.V."/>
            <person name="Hewinson R.G."/>
        </authorList>
    </citation>
    <scope>NUCLEOTIDE SEQUENCE [LARGE SCALE GENOMIC DNA]</scope>
    <source>
        <strain>ATCC BAA-935 / AF2122/97</strain>
    </source>
</reference>
<reference key="2">
    <citation type="journal article" date="2017" name="Genome Announc.">
        <title>Updated reference genome sequence and annotation of Mycobacterium bovis AF2122/97.</title>
        <authorList>
            <person name="Malone K.M."/>
            <person name="Farrell D."/>
            <person name="Stuber T.P."/>
            <person name="Schubert O.T."/>
            <person name="Aebersold R."/>
            <person name="Robbe-Austerman S."/>
            <person name="Gordon S.V."/>
        </authorList>
    </citation>
    <scope>NUCLEOTIDE SEQUENCE [LARGE SCALE GENOMIC DNA]</scope>
    <scope>GENOME REANNOTATION</scope>
    <source>
        <strain>ATCC BAA-935 / AF2122/97</strain>
    </source>
</reference>
<accession>P67732</accession>
<accession>A0A1R3Y214</accession>
<accession>Q10864</accession>
<accession>X2BJI3</accession>
<feature type="chain" id="PRO_0000160630" description="HTH-type transcriptional regulator CmtR">
    <location>
        <begin position="1"/>
        <end position="118"/>
    </location>
</feature>
<feature type="domain" description="HTH arsR-type" evidence="2">
    <location>
        <begin position="3"/>
        <end position="97"/>
    </location>
</feature>
<feature type="binding site" description="in other chain" evidence="2">
    <location>
        <position position="57"/>
    </location>
    <ligand>
        <name>Cd(2+)</name>
        <dbReference type="ChEBI" id="CHEBI:48775"/>
        <note>ligand shared between dimeric partners</note>
    </ligand>
</feature>
<feature type="binding site" description="in other chain" evidence="2">
    <location>
        <position position="61"/>
    </location>
    <ligand>
        <name>Cd(2+)</name>
        <dbReference type="ChEBI" id="CHEBI:48775"/>
        <note>ligand shared between dimeric partners</note>
    </ligand>
</feature>
<feature type="binding site" evidence="2">
    <location>
        <position position="102"/>
    </location>
    <ligand>
        <name>Cd(2+)</name>
        <dbReference type="ChEBI" id="CHEBI:48775"/>
        <note>ligand shared between dimeric partners</note>
    </ligand>
</feature>
<organism>
    <name type="scientific">Mycobacterium bovis (strain ATCC BAA-935 / AF2122/97)</name>
    <dbReference type="NCBI Taxonomy" id="233413"/>
    <lineage>
        <taxon>Bacteria</taxon>
        <taxon>Bacillati</taxon>
        <taxon>Actinomycetota</taxon>
        <taxon>Actinomycetes</taxon>
        <taxon>Mycobacteriales</taxon>
        <taxon>Mycobacteriaceae</taxon>
        <taxon>Mycobacterium</taxon>
        <taxon>Mycobacterium tuberculosis complex</taxon>
    </lineage>
</organism>
<protein>
    <recommendedName>
        <fullName>HTH-type transcriptional regulator CmtR</fullName>
    </recommendedName>
</protein>
<sequence>MLTCEMRESALARLGRALADPTRCRILVALLDGVCYPGQLAAHLGLTRSNVSNHLSCLRGCGLVVATYEGRQVRYALADSHLARALGELVQVVLAVDTDQPCVAERAASGEAVEMTGS</sequence>
<gene>
    <name type="primary">cmtR</name>
    <name type="ordered locus">BQ2027_MB2017C</name>
</gene>